<gene>
    <name type="ordered locus">MSMEG_0836</name>
    <name type="ordered locus">MSMEI_0817</name>
</gene>
<name>GCS21_MYCS2</name>
<comment type="function">
    <text evidence="1">ATP-dependent carboxylate-amine ligase which exhibits weak glutamate--cysteine ligase activity.</text>
</comment>
<comment type="catalytic activity">
    <reaction evidence="1">
        <text>L-cysteine + L-glutamate + ATP = gamma-L-glutamyl-L-cysteine + ADP + phosphate + H(+)</text>
        <dbReference type="Rhea" id="RHEA:13285"/>
        <dbReference type="ChEBI" id="CHEBI:15378"/>
        <dbReference type="ChEBI" id="CHEBI:29985"/>
        <dbReference type="ChEBI" id="CHEBI:30616"/>
        <dbReference type="ChEBI" id="CHEBI:35235"/>
        <dbReference type="ChEBI" id="CHEBI:43474"/>
        <dbReference type="ChEBI" id="CHEBI:58173"/>
        <dbReference type="ChEBI" id="CHEBI:456216"/>
        <dbReference type="EC" id="6.3.2.2"/>
    </reaction>
</comment>
<comment type="similarity">
    <text evidence="1">Belongs to the glutamate--cysteine ligase type 2 family. YbdK subfamily.</text>
</comment>
<protein>
    <recommendedName>
        <fullName evidence="1">Putative glutamate--cysteine ligase 2-1</fullName>
        <ecNumber evidence="1">6.3.2.2</ecNumber>
    </recommendedName>
    <alternativeName>
        <fullName evidence="1">Gamma-glutamylcysteine synthetase 2-1</fullName>
        <shortName evidence="1">GCS 2-1</shortName>
        <shortName evidence="1">Gamma-GCS 2-1</shortName>
    </alternativeName>
</protein>
<proteinExistence type="inferred from homology"/>
<keyword id="KW-0067">ATP-binding</keyword>
<keyword id="KW-0436">Ligase</keyword>
<keyword id="KW-0547">Nucleotide-binding</keyword>
<keyword id="KW-1185">Reference proteome</keyword>
<dbReference type="EC" id="6.3.2.2" evidence="1"/>
<dbReference type="EMBL" id="CP000480">
    <property type="protein sequence ID" value="ABK73867.1"/>
    <property type="molecule type" value="Genomic_DNA"/>
</dbReference>
<dbReference type="EMBL" id="CP001663">
    <property type="protein sequence ID" value="AFP37297.1"/>
    <property type="molecule type" value="Genomic_DNA"/>
</dbReference>
<dbReference type="RefSeq" id="WP_003892265.1">
    <property type="nucleotide sequence ID" value="NZ_SIJM01000010.1"/>
</dbReference>
<dbReference type="RefSeq" id="YP_885240.1">
    <property type="nucleotide sequence ID" value="NC_008596.1"/>
</dbReference>
<dbReference type="SMR" id="A0QQQ2"/>
<dbReference type="STRING" id="246196.MSMEG_0836"/>
<dbReference type="PaxDb" id="246196-MSMEI_0817"/>
<dbReference type="KEGG" id="msb:LJ00_04160"/>
<dbReference type="KEGG" id="msg:MSMEI_0817"/>
<dbReference type="KEGG" id="msm:MSMEG_0836"/>
<dbReference type="PATRIC" id="fig|246196.19.peg.829"/>
<dbReference type="eggNOG" id="COG2170">
    <property type="taxonomic scope" value="Bacteria"/>
</dbReference>
<dbReference type="OrthoDB" id="9769628at2"/>
<dbReference type="Proteomes" id="UP000000757">
    <property type="component" value="Chromosome"/>
</dbReference>
<dbReference type="Proteomes" id="UP000006158">
    <property type="component" value="Chromosome"/>
</dbReference>
<dbReference type="GO" id="GO:0005524">
    <property type="term" value="F:ATP binding"/>
    <property type="evidence" value="ECO:0007669"/>
    <property type="project" value="UniProtKB-KW"/>
</dbReference>
<dbReference type="GO" id="GO:0004357">
    <property type="term" value="F:glutamate-cysteine ligase activity"/>
    <property type="evidence" value="ECO:0007669"/>
    <property type="project" value="UniProtKB-EC"/>
</dbReference>
<dbReference type="GO" id="GO:0042398">
    <property type="term" value="P:modified amino acid biosynthetic process"/>
    <property type="evidence" value="ECO:0007669"/>
    <property type="project" value="InterPro"/>
</dbReference>
<dbReference type="Gene3D" id="3.30.590.20">
    <property type="match status" value="1"/>
</dbReference>
<dbReference type="HAMAP" id="MF_01609">
    <property type="entry name" value="Glu_cys_ligase_2"/>
    <property type="match status" value="1"/>
</dbReference>
<dbReference type="InterPro" id="IPR050141">
    <property type="entry name" value="GCL_type2/YbdK_subfam"/>
</dbReference>
<dbReference type="InterPro" id="IPR006336">
    <property type="entry name" value="GCS2"/>
</dbReference>
<dbReference type="InterPro" id="IPR014746">
    <property type="entry name" value="Gln_synth/guanido_kin_cat_dom"/>
</dbReference>
<dbReference type="InterPro" id="IPR011793">
    <property type="entry name" value="YbdK"/>
</dbReference>
<dbReference type="NCBIfam" id="TIGR02050">
    <property type="entry name" value="gshA_cyan_rel"/>
    <property type="match status" value="1"/>
</dbReference>
<dbReference type="NCBIfam" id="NF010042">
    <property type="entry name" value="PRK13517.1-2"/>
    <property type="match status" value="1"/>
</dbReference>
<dbReference type="NCBIfam" id="NF010043">
    <property type="entry name" value="PRK13517.1-3"/>
    <property type="match status" value="1"/>
</dbReference>
<dbReference type="NCBIfam" id="NF010044">
    <property type="entry name" value="PRK13517.1-4"/>
    <property type="match status" value="1"/>
</dbReference>
<dbReference type="PANTHER" id="PTHR36510">
    <property type="entry name" value="GLUTAMATE--CYSTEINE LIGASE 2-RELATED"/>
    <property type="match status" value="1"/>
</dbReference>
<dbReference type="PANTHER" id="PTHR36510:SF1">
    <property type="entry name" value="GLUTAMATE--CYSTEINE LIGASE 2-RELATED"/>
    <property type="match status" value="1"/>
</dbReference>
<dbReference type="Pfam" id="PF04107">
    <property type="entry name" value="GCS2"/>
    <property type="match status" value="1"/>
</dbReference>
<dbReference type="SUPFAM" id="SSF55931">
    <property type="entry name" value="Glutamine synthetase/guanido kinase"/>
    <property type="match status" value="1"/>
</dbReference>
<sequence>MSSLPADSRIDFAGSPRPTVGVEWEFALVDAKTRELSNEAAAVIAEIGENPHVHKELLRNTVEIVTGICENSGEAMGDLCDTLSTVRRAVRGRGMELFCAGTHPFGKWSAAQLTDAPRYAELIKRTQWWGRQMLIWGVHVHVGVSSAHKVMPIISSLLNQYPHLLALSASSPFWDGEDTGYASNRAMMFQQLPTAGLPFQFQTWHEFEGFVHDQKKTGIIDHLSEIRWDIRPSPQLGTVEVRIFDGVSNVRELSALVALTHCLIVDLDRRLDAGEQLPVMPPWHVQENKWRAARYGLDAVIILDADSNERLVTEDLDDLLNHLEPVAASLHCADELAAVEDIYRLGGSYQRQRRVAEENDGDLREVVDALIGELEL</sequence>
<feature type="chain" id="PRO_0000323505" description="Putative glutamate--cysteine ligase 2-1">
    <location>
        <begin position="1"/>
        <end position="376"/>
    </location>
</feature>
<accession>A0QQQ2</accession>
<accession>I7FX34</accession>
<reference key="1">
    <citation type="submission" date="2006-10" db="EMBL/GenBank/DDBJ databases">
        <authorList>
            <person name="Fleischmann R.D."/>
            <person name="Dodson R.J."/>
            <person name="Haft D.H."/>
            <person name="Merkel J.S."/>
            <person name="Nelson W.C."/>
            <person name="Fraser C.M."/>
        </authorList>
    </citation>
    <scope>NUCLEOTIDE SEQUENCE [LARGE SCALE GENOMIC DNA]</scope>
    <source>
        <strain>ATCC 700084 / mc(2)155</strain>
    </source>
</reference>
<reference key="2">
    <citation type="journal article" date="2007" name="Genome Biol.">
        <title>Interrupted coding sequences in Mycobacterium smegmatis: authentic mutations or sequencing errors?</title>
        <authorList>
            <person name="Deshayes C."/>
            <person name="Perrodou E."/>
            <person name="Gallien S."/>
            <person name="Euphrasie D."/>
            <person name="Schaeffer C."/>
            <person name="Van-Dorsselaer A."/>
            <person name="Poch O."/>
            <person name="Lecompte O."/>
            <person name="Reyrat J.-M."/>
        </authorList>
    </citation>
    <scope>NUCLEOTIDE SEQUENCE [LARGE SCALE GENOMIC DNA]</scope>
    <source>
        <strain>ATCC 700084 / mc(2)155</strain>
    </source>
</reference>
<reference key="3">
    <citation type="journal article" date="2009" name="Genome Res.">
        <title>Ortho-proteogenomics: multiple proteomes investigation through orthology and a new MS-based protocol.</title>
        <authorList>
            <person name="Gallien S."/>
            <person name="Perrodou E."/>
            <person name="Carapito C."/>
            <person name="Deshayes C."/>
            <person name="Reyrat J.-M."/>
            <person name="Van Dorsselaer A."/>
            <person name="Poch O."/>
            <person name="Schaeffer C."/>
            <person name="Lecompte O."/>
        </authorList>
    </citation>
    <scope>NUCLEOTIDE SEQUENCE [LARGE SCALE GENOMIC DNA]</scope>
    <source>
        <strain>ATCC 700084 / mc(2)155</strain>
    </source>
</reference>
<evidence type="ECO:0000255" key="1">
    <source>
        <dbReference type="HAMAP-Rule" id="MF_01609"/>
    </source>
</evidence>
<organism>
    <name type="scientific">Mycolicibacterium smegmatis (strain ATCC 700084 / mc(2)155)</name>
    <name type="common">Mycobacterium smegmatis</name>
    <dbReference type="NCBI Taxonomy" id="246196"/>
    <lineage>
        <taxon>Bacteria</taxon>
        <taxon>Bacillati</taxon>
        <taxon>Actinomycetota</taxon>
        <taxon>Actinomycetes</taxon>
        <taxon>Mycobacteriales</taxon>
        <taxon>Mycobacteriaceae</taxon>
        <taxon>Mycolicibacterium</taxon>
    </lineage>
</organism>